<gene>
    <name evidence="1" type="primary">psaA</name>
</gene>
<keyword id="KW-0004">4Fe-4S</keyword>
<keyword id="KW-0148">Chlorophyll</keyword>
<keyword id="KW-0150">Chloroplast</keyword>
<keyword id="KW-0157">Chromophore</keyword>
<keyword id="KW-0249">Electron transport</keyword>
<keyword id="KW-0408">Iron</keyword>
<keyword id="KW-0411">Iron-sulfur</keyword>
<keyword id="KW-0460">Magnesium</keyword>
<keyword id="KW-0472">Membrane</keyword>
<keyword id="KW-0479">Metal-binding</keyword>
<keyword id="KW-0560">Oxidoreductase</keyword>
<keyword id="KW-0602">Photosynthesis</keyword>
<keyword id="KW-0603">Photosystem I</keyword>
<keyword id="KW-0934">Plastid</keyword>
<keyword id="KW-0793">Thylakoid</keyword>
<keyword id="KW-0812">Transmembrane</keyword>
<keyword id="KW-1133">Transmembrane helix</keyword>
<keyword id="KW-0813">Transport</keyword>
<sequence length="750" mass="83143">MIIRSPEPEVKILVDRDPIKTSFEEWAKPGHFSRTIAKGPDTTTWIWNLHADAHDFDSHTSDLEEISRKVFSAHFGQLSIIFLWLSGMYFHGARFSNYEAWLSDPTHIGPSAQVVWPIVGQEILNGDVGGGFQGIQITSGFFQIWRASGITSELQLYCTGIGALVCAALMLFAGWFHYHKAAPKLAWFQDVESMLNHHLAGLLGLGSLSWAGHQVHVSLPINQFLNAGVDPKEIPLPHEYILNRDLLAQLYPSFAEGATPFFTLNWSKYSEFLTFRGGLDPVTGGLWLTDIAHHHLAIAILFLIAGHMYRTNWGIGHGIKDILEAHKGPFTGQGHKGLYEILTTSWHAQLSLNLAMLGSLTIIVAHHMYSMPPYPYLATDYATQLSLFTHHMWIGGFLIVGAAAHAAIFMVRDYDPTNRYNDLLDRVLRHRDAIISHLNWVCIFLGFHSFGLYIHNDTMSALGRPQDMFSDTAIQLQPVFAQWIQNTHALAPGVTAPGETASTSLTWGGGELVAVGGKVALLPIPLGTADFLVHHIHAFTIHVPVLILLKGVLFARSSRLIPDKANLGFRFPCDGPGRGGTCQVSAWDHVFLGLFWMYNAISVVIFHFSWKMQSDVWGSISDQGVVTHITGGNFAQSSITINGWLRDFLWAQASQVIQSYGSSLSAYGLFFLGAHFVWAFSLMFLFSGRGYWQELIESIVWAHNKLKVAPATQPRALSIVQGRAVGVTHYLLGGIATTWAFFLARIIAVG</sequence>
<organism>
    <name type="scientific">Crucihimalaya wallichii</name>
    <name type="common">Rock-cress</name>
    <name type="synonym">Arabidopsis campestris</name>
    <dbReference type="NCBI Taxonomy" id="78192"/>
    <lineage>
        <taxon>Eukaryota</taxon>
        <taxon>Viridiplantae</taxon>
        <taxon>Streptophyta</taxon>
        <taxon>Embryophyta</taxon>
        <taxon>Tracheophyta</taxon>
        <taxon>Spermatophyta</taxon>
        <taxon>Magnoliopsida</taxon>
        <taxon>eudicotyledons</taxon>
        <taxon>Gunneridae</taxon>
        <taxon>Pentapetalae</taxon>
        <taxon>rosids</taxon>
        <taxon>malvids</taxon>
        <taxon>Brassicales</taxon>
        <taxon>Brassicaceae</taxon>
        <taxon>Crucihimalayeae</taxon>
        <taxon>Crucihimalaya</taxon>
    </lineage>
</organism>
<dbReference type="EC" id="1.97.1.12" evidence="1"/>
<dbReference type="EMBL" id="AP009372">
    <property type="protein sequence ID" value="BAF50286.1"/>
    <property type="molecule type" value="Genomic_DNA"/>
</dbReference>
<dbReference type="RefSeq" id="YP_001123462.1">
    <property type="nucleotide sequence ID" value="NC_009271.1"/>
</dbReference>
<dbReference type="SMR" id="A4QKT1"/>
<dbReference type="GeneID" id="4962663"/>
<dbReference type="GO" id="GO:0009535">
    <property type="term" value="C:chloroplast thylakoid membrane"/>
    <property type="evidence" value="ECO:0007669"/>
    <property type="project" value="UniProtKB-SubCell"/>
</dbReference>
<dbReference type="GO" id="GO:0009522">
    <property type="term" value="C:photosystem I"/>
    <property type="evidence" value="ECO:0007669"/>
    <property type="project" value="UniProtKB-KW"/>
</dbReference>
<dbReference type="GO" id="GO:0051539">
    <property type="term" value="F:4 iron, 4 sulfur cluster binding"/>
    <property type="evidence" value="ECO:0007669"/>
    <property type="project" value="UniProtKB-KW"/>
</dbReference>
<dbReference type="GO" id="GO:0016168">
    <property type="term" value="F:chlorophyll binding"/>
    <property type="evidence" value="ECO:0007669"/>
    <property type="project" value="UniProtKB-KW"/>
</dbReference>
<dbReference type="GO" id="GO:0009055">
    <property type="term" value="F:electron transfer activity"/>
    <property type="evidence" value="ECO:0007669"/>
    <property type="project" value="UniProtKB-UniRule"/>
</dbReference>
<dbReference type="GO" id="GO:0000287">
    <property type="term" value="F:magnesium ion binding"/>
    <property type="evidence" value="ECO:0007669"/>
    <property type="project" value="UniProtKB-UniRule"/>
</dbReference>
<dbReference type="GO" id="GO:0016491">
    <property type="term" value="F:oxidoreductase activity"/>
    <property type="evidence" value="ECO:0007669"/>
    <property type="project" value="UniProtKB-KW"/>
</dbReference>
<dbReference type="GO" id="GO:0015979">
    <property type="term" value="P:photosynthesis"/>
    <property type="evidence" value="ECO:0007669"/>
    <property type="project" value="UniProtKB-UniRule"/>
</dbReference>
<dbReference type="FunFam" id="1.20.1130.10:FF:000001">
    <property type="entry name" value="Photosystem I P700 chlorophyll a apoprotein A2"/>
    <property type="match status" value="1"/>
</dbReference>
<dbReference type="Gene3D" id="1.20.1130.10">
    <property type="entry name" value="Photosystem I PsaA/PsaB"/>
    <property type="match status" value="1"/>
</dbReference>
<dbReference type="HAMAP" id="MF_00458">
    <property type="entry name" value="PSI_PsaA"/>
    <property type="match status" value="1"/>
</dbReference>
<dbReference type="InterPro" id="IPR006243">
    <property type="entry name" value="PSI_PsaA"/>
</dbReference>
<dbReference type="InterPro" id="IPR001280">
    <property type="entry name" value="PSI_PsaA/B"/>
</dbReference>
<dbReference type="InterPro" id="IPR020586">
    <property type="entry name" value="PSI_PsaA/B_CS"/>
</dbReference>
<dbReference type="InterPro" id="IPR036408">
    <property type="entry name" value="PSI_PsaA/B_sf"/>
</dbReference>
<dbReference type="NCBIfam" id="TIGR01335">
    <property type="entry name" value="psaA"/>
    <property type="match status" value="1"/>
</dbReference>
<dbReference type="PANTHER" id="PTHR30128">
    <property type="entry name" value="OUTER MEMBRANE PROTEIN, OMPA-RELATED"/>
    <property type="match status" value="1"/>
</dbReference>
<dbReference type="PANTHER" id="PTHR30128:SF19">
    <property type="entry name" value="PHOTOSYSTEM I P700 CHLOROPHYLL A APOPROTEIN A1-RELATED"/>
    <property type="match status" value="1"/>
</dbReference>
<dbReference type="Pfam" id="PF00223">
    <property type="entry name" value="PsaA_PsaB"/>
    <property type="match status" value="1"/>
</dbReference>
<dbReference type="PIRSF" id="PIRSF002905">
    <property type="entry name" value="PSI_A"/>
    <property type="match status" value="1"/>
</dbReference>
<dbReference type="PRINTS" id="PR00257">
    <property type="entry name" value="PHOTSYSPSAAB"/>
</dbReference>
<dbReference type="SUPFAM" id="SSF81558">
    <property type="entry name" value="Photosystem I subunits PsaA/PsaB"/>
    <property type="match status" value="1"/>
</dbReference>
<dbReference type="PROSITE" id="PS00419">
    <property type="entry name" value="PHOTOSYSTEM_I_PSAAB"/>
    <property type="match status" value="1"/>
</dbReference>
<protein>
    <recommendedName>
        <fullName evidence="1">Photosystem I P700 chlorophyll a apoprotein A1</fullName>
        <ecNumber evidence="1">1.97.1.12</ecNumber>
    </recommendedName>
    <alternativeName>
        <fullName evidence="1">PSI-A</fullName>
    </alternativeName>
    <alternativeName>
        <fullName evidence="1">PsaA</fullName>
    </alternativeName>
</protein>
<evidence type="ECO:0000255" key="1">
    <source>
        <dbReference type="HAMAP-Rule" id="MF_00458"/>
    </source>
</evidence>
<geneLocation type="chloroplast"/>
<proteinExistence type="inferred from homology"/>
<feature type="chain" id="PRO_0000294220" description="Photosystem I P700 chlorophyll a apoprotein A1">
    <location>
        <begin position="1"/>
        <end position="750"/>
    </location>
</feature>
<feature type="transmembrane region" description="Helical; Name=I" evidence="1">
    <location>
        <begin position="70"/>
        <end position="93"/>
    </location>
</feature>
<feature type="transmembrane region" description="Helical; Name=II" evidence="1">
    <location>
        <begin position="156"/>
        <end position="179"/>
    </location>
</feature>
<feature type="transmembrane region" description="Helical; Name=III" evidence="1">
    <location>
        <begin position="195"/>
        <end position="219"/>
    </location>
</feature>
<feature type="transmembrane region" description="Helical; Name=IV" evidence="1">
    <location>
        <begin position="291"/>
        <end position="309"/>
    </location>
</feature>
<feature type="transmembrane region" description="Helical; Name=V" evidence="1">
    <location>
        <begin position="346"/>
        <end position="369"/>
    </location>
</feature>
<feature type="transmembrane region" description="Helical; Name=VI" evidence="1">
    <location>
        <begin position="385"/>
        <end position="411"/>
    </location>
</feature>
<feature type="transmembrane region" description="Helical; Name=VII" evidence="1">
    <location>
        <begin position="433"/>
        <end position="455"/>
    </location>
</feature>
<feature type="transmembrane region" description="Helical; Name=VIII" evidence="1">
    <location>
        <begin position="531"/>
        <end position="549"/>
    </location>
</feature>
<feature type="transmembrane region" description="Helical; Name=IX" evidence="1">
    <location>
        <begin position="589"/>
        <end position="610"/>
    </location>
</feature>
<feature type="transmembrane region" description="Helical; Name=X" evidence="1">
    <location>
        <begin position="664"/>
        <end position="686"/>
    </location>
</feature>
<feature type="transmembrane region" description="Helical; Name=XI" evidence="1">
    <location>
        <begin position="724"/>
        <end position="744"/>
    </location>
</feature>
<feature type="binding site" evidence="1">
    <location>
        <position position="573"/>
    </location>
    <ligand>
        <name>[4Fe-4S] cluster</name>
        <dbReference type="ChEBI" id="CHEBI:49883"/>
        <note>ligand shared between dimeric partners</note>
    </ligand>
</feature>
<feature type="binding site" evidence="1">
    <location>
        <position position="582"/>
    </location>
    <ligand>
        <name>[4Fe-4S] cluster</name>
        <dbReference type="ChEBI" id="CHEBI:49883"/>
        <note>ligand shared between dimeric partners</note>
    </ligand>
</feature>
<feature type="binding site" description="axial binding residue" evidence="1">
    <location>
        <position position="675"/>
    </location>
    <ligand>
        <name>chlorophyll a'</name>
        <dbReference type="ChEBI" id="CHEBI:189419"/>
        <label>A1</label>
    </ligand>
    <ligandPart>
        <name>Mg</name>
        <dbReference type="ChEBI" id="CHEBI:25107"/>
    </ligandPart>
</feature>
<feature type="binding site" description="axial binding residue" evidence="1">
    <location>
        <position position="683"/>
    </location>
    <ligand>
        <name>chlorophyll a</name>
        <dbReference type="ChEBI" id="CHEBI:58416"/>
        <label>A3</label>
    </ligand>
    <ligandPart>
        <name>Mg</name>
        <dbReference type="ChEBI" id="CHEBI:25107"/>
    </ligandPart>
</feature>
<feature type="binding site" evidence="1">
    <location>
        <position position="691"/>
    </location>
    <ligand>
        <name>chlorophyll a</name>
        <dbReference type="ChEBI" id="CHEBI:58416"/>
        <label>A3</label>
    </ligand>
</feature>
<feature type="binding site" evidence="1">
    <location>
        <position position="692"/>
    </location>
    <ligand>
        <name>phylloquinone</name>
        <dbReference type="ChEBI" id="CHEBI:18067"/>
        <label>A</label>
    </ligand>
</feature>
<comment type="function">
    <text>PsaA and PsaB bind P700, the primary electron donor of photosystem I (PSI), as well as the electron acceptors A0, A1 and FX. PSI is a plastocyanin-ferredoxin oxidoreductase, converting photonic excitation into a charge separation, which transfers an electron from the donor P700 chlorophyll pair to the spectroscopically characterized acceptors A0, A1, FX, FA and FB in turn. Oxidized P700 is reduced on the lumenal side of the thylakoid membrane by plastocyanin.</text>
</comment>
<comment type="catalytic activity">
    <reaction evidence="1">
        <text>reduced [plastocyanin] + hnu + oxidized [2Fe-2S]-[ferredoxin] = oxidized [plastocyanin] + reduced [2Fe-2S]-[ferredoxin]</text>
        <dbReference type="Rhea" id="RHEA:30407"/>
        <dbReference type="Rhea" id="RHEA-COMP:10000"/>
        <dbReference type="Rhea" id="RHEA-COMP:10001"/>
        <dbReference type="Rhea" id="RHEA-COMP:10039"/>
        <dbReference type="Rhea" id="RHEA-COMP:10040"/>
        <dbReference type="ChEBI" id="CHEBI:29036"/>
        <dbReference type="ChEBI" id="CHEBI:30212"/>
        <dbReference type="ChEBI" id="CHEBI:33737"/>
        <dbReference type="ChEBI" id="CHEBI:33738"/>
        <dbReference type="ChEBI" id="CHEBI:49552"/>
        <dbReference type="EC" id="1.97.1.12"/>
    </reaction>
</comment>
<comment type="cofactor">
    <text evidence="1">P700 is a chlorophyll a/chlorophyll a' dimer, A0 is one or more chlorophyll a, A1 is one or both phylloquinones and FX is a shared 4Fe-4S iron-sulfur center.</text>
</comment>
<comment type="subunit">
    <text evidence="1">The PsaA/B heterodimer binds the P700 chlorophyll special pair and subsequent electron acceptors. PSI consists of a core antenna complex that captures photons, and an electron transfer chain that converts photonic excitation into a charge separation. The eukaryotic PSI reaction center is composed of at least 11 subunits.</text>
</comment>
<comment type="subcellular location">
    <subcellularLocation>
        <location evidence="1">Plastid</location>
        <location evidence="1">Chloroplast thylakoid membrane</location>
        <topology evidence="1">Multi-pass membrane protein</topology>
    </subcellularLocation>
</comment>
<comment type="similarity">
    <text evidence="1">Belongs to the PsaA/PsaB family.</text>
</comment>
<accession>A4QKT1</accession>
<name>PSAA_CRUWA</name>
<reference key="1">
    <citation type="submission" date="2007-03" db="EMBL/GenBank/DDBJ databases">
        <title>Sequencing analysis of Crucihimalaya wallichii chloroplast DNA.</title>
        <authorList>
            <person name="Hosouchi T."/>
            <person name="Tsuruoka H."/>
            <person name="Kotani H."/>
        </authorList>
    </citation>
    <scope>NUCLEOTIDE SEQUENCE [LARGE SCALE GENOMIC DNA]</scope>
</reference>